<name>SSUD_ECOL5</name>
<comment type="function">
    <text evidence="1">Catalyzes the desulfonation of aliphatic sulfonates.</text>
</comment>
<comment type="catalytic activity">
    <reaction evidence="1">
        <text>an alkanesulfonate + FMNH2 + O2 = an aldehyde + FMN + sulfite + H2O + 2 H(+)</text>
        <dbReference type="Rhea" id="RHEA:23064"/>
        <dbReference type="ChEBI" id="CHEBI:15377"/>
        <dbReference type="ChEBI" id="CHEBI:15378"/>
        <dbReference type="ChEBI" id="CHEBI:15379"/>
        <dbReference type="ChEBI" id="CHEBI:17359"/>
        <dbReference type="ChEBI" id="CHEBI:17478"/>
        <dbReference type="ChEBI" id="CHEBI:57618"/>
        <dbReference type="ChEBI" id="CHEBI:58210"/>
        <dbReference type="ChEBI" id="CHEBI:134249"/>
        <dbReference type="EC" id="1.14.14.5"/>
    </reaction>
</comment>
<comment type="subunit">
    <text evidence="1">Homotetramer.</text>
</comment>
<comment type="miscellaneous">
    <text evidence="1">FMNH(2) which is absolutely required for this enzymatic reaction, is provided by SsuE.</text>
</comment>
<comment type="similarity">
    <text evidence="1">Belongs to the SsuD family.</text>
</comment>
<proteinExistence type="inferred from homology"/>
<reference key="1">
    <citation type="journal article" date="2006" name="Mol. Microbiol.">
        <title>Role of pathogenicity island-associated integrases in the genome plasticity of uropathogenic Escherichia coli strain 536.</title>
        <authorList>
            <person name="Hochhut B."/>
            <person name="Wilde C."/>
            <person name="Balling G."/>
            <person name="Middendorf B."/>
            <person name="Dobrindt U."/>
            <person name="Brzuszkiewicz E."/>
            <person name="Gottschalk G."/>
            <person name="Carniel E."/>
            <person name="Hacker J."/>
        </authorList>
    </citation>
    <scope>NUCLEOTIDE SEQUENCE [LARGE SCALE GENOMIC DNA]</scope>
    <source>
        <strain>536 / UPEC</strain>
    </source>
</reference>
<gene>
    <name evidence="1" type="primary">ssuD</name>
    <name type="ordered locus">ECP_0947</name>
</gene>
<dbReference type="EC" id="1.14.14.5" evidence="1"/>
<dbReference type="EMBL" id="CP000247">
    <property type="protein sequence ID" value="ABG68960.1"/>
    <property type="molecule type" value="Genomic_DNA"/>
</dbReference>
<dbReference type="RefSeq" id="WP_000055997.1">
    <property type="nucleotide sequence ID" value="NC_008253.1"/>
</dbReference>
<dbReference type="SMR" id="Q0TJB9"/>
<dbReference type="KEGG" id="ecp:ECP_0947"/>
<dbReference type="HOGENOM" id="CLU_027853_1_0_6"/>
<dbReference type="Proteomes" id="UP000009182">
    <property type="component" value="Chromosome"/>
</dbReference>
<dbReference type="GO" id="GO:0008726">
    <property type="term" value="F:alkanesulfonate monooxygenase activity"/>
    <property type="evidence" value="ECO:0007669"/>
    <property type="project" value="UniProtKB-UniRule"/>
</dbReference>
<dbReference type="GO" id="GO:0046306">
    <property type="term" value="P:alkanesulfonate catabolic process"/>
    <property type="evidence" value="ECO:0007669"/>
    <property type="project" value="TreeGrafter"/>
</dbReference>
<dbReference type="CDD" id="cd01094">
    <property type="entry name" value="Alkanesulfonate_monoxygenase"/>
    <property type="match status" value="1"/>
</dbReference>
<dbReference type="FunFam" id="3.20.20.30:FF:000001">
    <property type="entry name" value="Alkanesulfonate monooxygenase"/>
    <property type="match status" value="1"/>
</dbReference>
<dbReference type="Gene3D" id="3.20.20.30">
    <property type="entry name" value="Luciferase-like domain"/>
    <property type="match status" value="1"/>
</dbReference>
<dbReference type="HAMAP" id="MF_01229">
    <property type="entry name" value="Alkanesulf_monooxygen"/>
    <property type="match status" value="1"/>
</dbReference>
<dbReference type="InterPro" id="IPR019911">
    <property type="entry name" value="Alkanesulphonate_mOase_FMN-dep"/>
</dbReference>
<dbReference type="InterPro" id="IPR011251">
    <property type="entry name" value="Luciferase-like_dom"/>
</dbReference>
<dbReference type="InterPro" id="IPR036661">
    <property type="entry name" value="Luciferase-like_sf"/>
</dbReference>
<dbReference type="InterPro" id="IPR050172">
    <property type="entry name" value="SsuD_RutA_monooxygenase"/>
</dbReference>
<dbReference type="NCBIfam" id="TIGR03565">
    <property type="entry name" value="alk_sulf_monoox"/>
    <property type="match status" value="1"/>
</dbReference>
<dbReference type="NCBIfam" id="NF001939">
    <property type="entry name" value="PRK00719.1"/>
    <property type="match status" value="1"/>
</dbReference>
<dbReference type="PANTHER" id="PTHR42847">
    <property type="entry name" value="ALKANESULFONATE MONOOXYGENASE"/>
    <property type="match status" value="1"/>
</dbReference>
<dbReference type="PANTHER" id="PTHR42847:SF4">
    <property type="entry name" value="ALKANESULFONATE MONOOXYGENASE-RELATED"/>
    <property type="match status" value="1"/>
</dbReference>
<dbReference type="Pfam" id="PF00296">
    <property type="entry name" value="Bac_luciferase"/>
    <property type="match status" value="1"/>
</dbReference>
<dbReference type="SUPFAM" id="SSF51679">
    <property type="entry name" value="Bacterial luciferase-like"/>
    <property type="match status" value="1"/>
</dbReference>
<accession>Q0TJB9</accession>
<feature type="chain" id="PRO_1000066822" description="Alkanesulfonate monooxygenase">
    <location>
        <begin position="1"/>
        <end position="381"/>
    </location>
</feature>
<sequence length="381" mass="41657">MSLNMFWFLPTHGDGHYLGTEEGSRPVDHGYLQQIAQAADRLGYTGVLIPTGRSCEDAWLVAASMIPVTQRLKFLVALRPSVTSPTVAARQAATLDRLSNGRALFNLVTGSDPQELAGDGVFLDHSERYEASAEFTQVWRRLLLGETVNFNGKHIHVRGAKLLFPPIQQPYPPLYFGGSSDVAQELAAEQVDLYLTWGEPPELVKEKIEQVRAKAAAHGRKIRFGIRLHVIVRETNDEAWQAAERLISHLDDETIAKAQAAFARTDSVGQQRMAALHNGKRDNLEISPNLWAGVGLVRGGAGTALVGDGPTVAARINEYAALGIDSFVLSGYPHLEEAYRVGELLFPHLDVAIPEIPQPQPLNPQGEAVANDFIPRNVAQS</sequence>
<protein>
    <recommendedName>
        <fullName evidence="1">Alkanesulfonate monooxygenase</fullName>
        <ecNumber evidence="1">1.14.14.5</ecNumber>
    </recommendedName>
    <alternativeName>
        <fullName evidence="1">FMNH2-dependent aliphatic sulfonate monooxygenase</fullName>
    </alternativeName>
</protein>
<keyword id="KW-0285">Flavoprotein</keyword>
<keyword id="KW-0288">FMN</keyword>
<keyword id="KW-0503">Monooxygenase</keyword>
<keyword id="KW-0560">Oxidoreductase</keyword>
<organism>
    <name type="scientific">Escherichia coli O6:K15:H31 (strain 536 / UPEC)</name>
    <dbReference type="NCBI Taxonomy" id="362663"/>
    <lineage>
        <taxon>Bacteria</taxon>
        <taxon>Pseudomonadati</taxon>
        <taxon>Pseudomonadota</taxon>
        <taxon>Gammaproteobacteria</taxon>
        <taxon>Enterobacterales</taxon>
        <taxon>Enterobacteriaceae</taxon>
        <taxon>Escherichia</taxon>
    </lineage>
</organism>
<evidence type="ECO:0000255" key="1">
    <source>
        <dbReference type="HAMAP-Rule" id="MF_01229"/>
    </source>
</evidence>